<keyword id="KW-1015">Disulfide bond</keyword>
<keyword id="KW-0964">Secreted</keyword>
<keyword id="KW-0732">Signal</keyword>
<keyword id="KW-0800">Toxin</keyword>
<dbReference type="GO" id="GO:0005576">
    <property type="term" value="C:extracellular region"/>
    <property type="evidence" value="ECO:0007669"/>
    <property type="project" value="UniProtKB-SubCell"/>
</dbReference>
<dbReference type="GO" id="GO:0090729">
    <property type="term" value="F:toxin activity"/>
    <property type="evidence" value="ECO:0007669"/>
    <property type="project" value="UniProtKB-KW"/>
</dbReference>
<evidence type="ECO:0000255" key="1"/>
<evidence type="ECO:0000303" key="2">
    <source>
    </source>
</evidence>
<evidence type="ECO:0000305" key="3"/>
<evidence type="ECO:0000305" key="4">
    <source>
    </source>
</evidence>
<name>TXD1A_SCOMO</name>
<proteinExistence type="inferred from homology"/>
<sequence length="76" mass="8286">MAYICAXTLAFLLCVNTGIIQAEDKEYVSSEHMEFRESCIPQDGECDRMADACCPGLQCLGCNPLAAHDTGHCKCQ</sequence>
<organism>
    <name type="scientific">Scolopendra morsitans</name>
    <name type="common">Tanzanian blue ringleg centipede</name>
    <dbReference type="NCBI Taxonomy" id="943129"/>
    <lineage>
        <taxon>Eukaryota</taxon>
        <taxon>Metazoa</taxon>
        <taxon>Ecdysozoa</taxon>
        <taxon>Arthropoda</taxon>
        <taxon>Myriapoda</taxon>
        <taxon>Chilopoda</taxon>
        <taxon>Pleurostigmophora</taxon>
        <taxon>Scolopendromorpha</taxon>
        <taxon>Scolopendridae</taxon>
        <taxon>Scolopendra</taxon>
    </lineage>
</organism>
<accession>P0DQB0</accession>
<protein>
    <recommendedName>
        <fullName evidence="2">U-scoloptoxin(13)-Sm1a</fullName>
        <shortName evidence="2">U-SLPTX(13)-Sm1a</shortName>
    </recommendedName>
</protein>
<comment type="subcellular location">
    <subcellularLocation>
        <location evidence="4">Secreted</location>
    </subcellularLocation>
</comment>
<comment type="tissue specificity">
    <text evidence="4">Expressed by the venom gland.</text>
</comment>
<comment type="PTM">
    <text evidence="3">Contains 4 disulfide bonds.</text>
</comment>
<comment type="similarity">
    <text evidence="3">Belongs to the scoloptoxin-13 family.</text>
</comment>
<comment type="caution">
    <text evidence="4">All S.morsitans family members described in 'Undeheim et al., 2014' have not been imported into UniProtKB. Please, refer to this paper to access them.</text>
</comment>
<comment type="online information" name="National Center for Biotechnology Information (NCBI)">
    <link uri="https://www.ncbi.nlm.nih.gov/nuccore/GASH01000142"/>
</comment>
<reference key="1">
    <citation type="journal article" date="2014" name="Mol. Biol. Evol.">
        <title>Clawing through evolution: toxin diversification and convergence in the ancient lineage Chilopoda (centipedes).</title>
        <authorList>
            <person name="Undheim E.A."/>
            <person name="Jones A."/>
            <person name="Clauser K.R."/>
            <person name="Holland J.W."/>
            <person name="Pineda S.S."/>
            <person name="King G.F."/>
            <person name="Fry B.G."/>
        </authorList>
    </citation>
    <scope>NUCLEOTIDE SEQUENCE [MRNA]</scope>
    <scope>NOMENCLATURE</scope>
    <source>
        <tissue>Venom gland</tissue>
    </source>
</reference>
<feature type="signal peptide" evidence="1">
    <location>
        <begin position="1"/>
        <end position="22"/>
    </location>
</feature>
<feature type="chain" id="PRO_0000446784" description="U-scoloptoxin(13)-Sm1a" evidence="3">
    <location>
        <begin position="23"/>
        <end position="76"/>
    </location>
</feature>